<keyword id="KW-0456">Lyase</keyword>
<keyword id="KW-1185">Reference proteome</keyword>
<evidence type="ECO:0000255" key="1">
    <source>
        <dbReference type="HAMAP-Rule" id="MF_01830"/>
    </source>
</evidence>
<proteinExistence type="inferred from homology"/>
<protein>
    <recommendedName>
        <fullName evidence="1">Putative hydro-lyase Teth39_1160</fullName>
        <ecNumber evidence="1">4.2.1.-</ecNumber>
    </recommendedName>
</protein>
<comment type="similarity">
    <text evidence="1">Belongs to the D-glutamate cyclase family.</text>
</comment>
<organism>
    <name type="scientific">Thermoanaerobacter pseudethanolicus (strain ATCC 33223 / 39E)</name>
    <name type="common">Clostridium thermohydrosulfuricum</name>
    <dbReference type="NCBI Taxonomy" id="340099"/>
    <lineage>
        <taxon>Bacteria</taxon>
        <taxon>Bacillati</taxon>
        <taxon>Bacillota</taxon>
        <taxon>Clostridia</taxon>
        <taxon>Thermoanaerobacterales</taxon>
        <taxon>Thermoanaerobacteraceae</taxon>
        <taxon>Thermoanaerobacter</taxon>
    </lineage>
</organism>
<dbReference type="EC" id="4.2.1.-" evidence="1"/>
<dbReference type="EMBL" id="CP000924">
    <property type="protein sequence ID" value="ABY94815.1"/>
    <property type="molecule type" value="Genomic_DNA"/>
</dbReference>
<dbReference type="RefSeq" id="WP_009052368.1">
    <property type="nucleotide sequence ID" value="NC_010321.1"/>
</dbReference>
<dbReference type="SMR" id="B0K9K2"/>
<dbReference type="STRING" id="340099.Teth39_1160"/>
<dbReference type="KEGG" id="tpd:Teth39_1160"/>
<dbReference type="eggNOG" id="COG4336">
    <property type="taxonomic scope" value="Bacteria"/>
</dbReference>
<dbReference type="HOGENOM" id="CLU_059759_0_0_9"/>
<dbReference type="Proteomes" id="UP000002156">
    <property type="component" value="Chromosome"/>
</dbReference>
<dbReference type="GO" id="GO:0016829">
    <property type="term" value="F:lyase activity"/>
    <property type="evidence" value="ECO:0007669"/>
    <property type="project" value="UniProtKB-KW"/>
</dbReference>
<dbReference type="FunFam" id="3.30.2040.10:FF:000001">
    <property type="entry name" value="D-glutamate cyclase, mitochondrial"/>
    <property type="match status" value="1"/>
</dbReference>
<dbReference type="Gene3D" id="3.40.1640.10">
    <property type="entry name" value="PSTPO5379-like"/>
    <property type="match status" value="1"/>
</dbReference>
<dbReference type="Gene3D" id="3.30.2040.10">
    <property type="entry name" value="PSTPO5379-like domain"/>
    <property type="match status" value="1"/>
</dbReference>
<dbReference type="HAMAP" id="MF_01830">
    <property type="entry name" value="Hydro_lyase"/>
    <property type="match status" value="1"/>
</dbReference>
<dbReference type="InterPro" id="IPR009906">
    <property type="entry name" value="D-Glu_cyclase"/>
</dbReference>
<dbReference type="InterPro" id="IPR038021">
    <property type="entry name" value="Putative_hydro-lyase"/>
</dbReference>
<dbReference type="InterPro" id="IPR016938">
    <property type="entry name" value="UPF0317"/>
</dbReference>
<dbReference type="NCBIfam" id="NF003969">
    <property type="entry name" value="PRK05463.1"/>
    <property type="match status" value="1"/>
</dbReference>
<dbReference type="PANTHER" id="PTHR32022">
    <property type="entry name" value="D-GLUTAMATE CYCLASE, MITOCHONDRIAL"/>
    <property type="match status" value="1"/>
</dbReference>
<dbReference type="PANTHER" id="PTHR32022:SF10">
    <property type="entry name" value="D-GLUTAMATE CYCLASE, MITOCHONDRIAL"/>
    <property type="match status" value="1"/>
</dbReference>
<dbReference type="Pfam" id="PF07286">
    <property type="entry name" value="D-Glu_cyclase"/>
    <property type="match status" value="1"/>
</dbReference>
<dbReference type="PIRSF" id="PIRSF029755">
    <property type="entry name" value="UCP029755"/>
    <property type="match status" value="1"/>
</dbReference>
<dbReference type="SUPFAM" id="SSF160920">
    <property type="entry name" value="PSTPO5379-like"/>
    <property type="match status" value="1"/>
</dbReference>
<name>Y1160_THEP3</name>
<sequence length="265" mass="29346">MPEKINYENLKPSEARQLIREGVLTGPTAGIALGYTQANLVMLPKELAYDFLLFAFRNPKPCPILDVTDVGSPEPKGVAKGADLRTDIPKYRIYKKGVLEAEVNDIRDYWRDDFVAFLLGCSFTFEKALLENDIPVRHIEEGKNVPMYITNIETRPAGIFHGYMVVSMRPIPQNLVVRAVQVTSRFPSVHGAPVHIGDPKAIGIASLDKPDFGDPVEIKAGEVPVFWACGVTPQAVAMKSKPEIMITHSPGHMFITDLKDEMLAC</sequence>
<feature type="chain" id="PRO_0000379870" description="Putative hydro-lyase Teth39_1160">
    <location>
        <begin position="1"/>
        <end position="265"/>
    </location>
</feature>
<reference key="1">
    <citation type="submission" date="2008-01" db="EMBL/GenBank/DDBJ databases">
        <title>Complete sequence of Thermoanaerobacter pseudethanolicus 39E.</title>
        <authorList>
            <person name="Copeland A."/>
            <person name="Lucas S."/>
            <person name="Lapidus A."/>
            <person name="Barry K."/>
            <person name="Glavina del Rio T."/>
            <person name="Dalin E."/>
            <person name="Tice H."/>
            <person name="Pitluck S."/>
            <person name="Bruce D."/>
            <person name="Goodwin L."/>
            <person name="Saunders E."/>
            <person name="Brettin T."/>
            <person name="Detter J.C."/>
            <person name="Han C."/>
            <person name="Schmutz J."/>
            <person name="Larimer F."/>
            <person name="Land M."/>
            <person name="Hauser L."/>
            <person name="Kyrpides N."/>
            <person name="Lykidis A."/>
            <person name="Hemme C."/>
            <person name="Fields M.W."/>
            <person name="He Z."/>
            <person name="Zhou J."/>
            <person name="Richardson P."/>
        </authorList>
    </citation>
    <scope>NUCLEOTIDE SEQUENCE [LARGE SCALE GENOMIC DNA]</scope>
    <source>
        <strain>ATCC 33223 / DSM 2355 / 39E</strain>
    </source>
</reference>
<accession>B0K9K2</accession>
<gene>
    <name type="ordered locus">Teth39_1160</name>
</gene>